<dbReference type="EMBL" id="BC079989">
    <property type="protein sequence ID" value="AAH79989.1"/>
    <property type="molecule type" value="mRNA"/>
</dbReference>
<dbReference type="RefSeq" id="NP_001087480.1">
    <property type="nucleotide sequence ID" value="NM_001094011.1"/>
</dbReference>
<dbReference type="SMR" id="Q68F55"/>
<dbReference type="DNASU" id="447304"/>
<dbReference type="GeneID" id="447304"/>
<dbReference type="KEGG" id="xla:447304"/>
<dbReference type="AGR" id="Xenbase:XB-GENE-978354"/>
<dbReference type="CTD" id="447304"/>
<dbReference type="Xenbase" id="XB-GENE-978354">
    <property type="gene designation" value="ptma.S"/>
</dbReference>
<dbReference type="Proteomes" id="UP000186698">
    <property type="component" value="Chromosome 5S"/>
</dbReference>
<dbReference type="Bgee" id="447304">
    <property type="expression patterns" value="Expressed in neurula embryo and 19 other cell types or tissues"/>
</dbReference>
<dbReference type="GO" id="GO:0005634">
    <property type="term" value="C:nucleus"/>
    <property type="evidence" value="ECO:0000318"/>
    <property type="project" value="GO_Central"/>
</dbReference>
<dbReference type="GO" id="GO:0042393">
    <property type="term" value="F:histone binding"/>
    <property type="evidence" value="ECO:0000318"/>
    <property type="project" value="GO_Central"/>
</dbReference>
<dbReference type="GO" id="GO:0043066">
    <property type="term" value="P:negative regulation of apoptotic process"/>
    <property type="evidence" value="ECO:0000318"/>
    <property type="project" value="GO_Central"/>
</dbReference>
<dbReference type="GO" id="GO:0045944">
    <property type="term" value="P:positive regulation of transcription by RNA polymerase II"/>
    <property type="evidence" value="ECO:0000318"/>
    <property type="project" value="GO_Central"/>
</dbReference>
<dbReference type="InterPro" id="IPR004931">
    <property type="entry name" value="Pro/parathymosin"/>
</dbReference>
<dbReference type="PANTHER" id="PTHR22745">
    <property type="entry name" value="PROTHYMOSIN ALPHA"/>
    <property type="match status" value="1"/>
</dbReference>
<dbReference type="PANTHER" id="PTHR22745:SF0">
    <property type="entry name" value="PROTHYMOSIN ALPHA"/>
    <property type="match status" value="1"/>
</dbReference>
<dbReference type="Pfam" id="PF03247">
    <property type="entry name" value="Prothymosin"/>
    <property type="match status" value="1"/>
</dbReference>
<organism>
    <name type="scientific">Xenopus laevis</name>
    <name type="common">African clawed frog</name>
    <dbReference type="NCBI Taxonomy" id="8355"/>
    <lineage>
        <taxon>Eukaryota</taxon>
        <taxon>Metazoa</taxon>
        <taxon>Chordata</taxon>
        <taxon>Craniata</taxon>
        <taxon>Vertebrata</taxon>
        <taxon>Euteleostomi</taxon>
        <taxon>Amphibia</taxon>
        <taxon>Batrachia</taxon>
        <taxon>Anura</taxon>
        <taxon>Pipoidea</taxon>
        <taxon>Pipidae</taxon>
        <taxon>Xenopodinae</taxon>
        <taxon>Xenopus</taxon>
        <taxon>Xenopus</taxon>
    </lineage>
</organism>
<evidence type="ECO:0000250" key="1">
    <source>
        <dbReference type="UniProtKB" id="P26350"/>
    </source>
</evidence>
<evidence type="ECO:0000255" key="2"/>
<evidence type="ECO:0000256" key="3">
    <source>
        <dbReference type="SAM" id="MobiDB-lite"/>
    </source>
</evidence>
<evidence type="ECO:0000312" key="4">
    <source>
        <dbReference type="EMBL" id="AAH79989.1"/>
    </source>
</evidence>
<comment type="subcellular location">
    <subcellularLocation>
        <location evidence="1">Nucleus</location>
    </subcellularLocation>
</comment>
<comment type="similarity">
    <text evidence="2">Belongs to the pro/parathymosin family.</text>
</comment>
<accession>Q68F55</accession>
<name>PTMAB_XENLA</name>
<feature type="chain" id="PRO_0000239942" description="Prothymosin alpha-B">
    <location>
        <begin position="1"/>
        <end position="112"/>
    </location>
</feature>
<feature type="region of interest" description="Disordered" evidence="3">
    <location>
        <begin position="1"/>
        <end position="112"/>
    </location>
</feature>
<feature type="compositionally biased region" description="Basic and acidic residues" evidence="3">
    <location>
        <begin position="9"/>
        <end position="35"/>
    </location>
</feature>
<feature type="compositionally biased region" description="Acidic residues" evidence="3">
    <location>
        <begin position="41"/>
        <end position="83"/>
    </location>
</feature>
<feature type="compositionally biased region" description="Acidic residues" evidence="3">
    <location>
        <begin position="92"/>
        <end position="101"/>
    </location>
</feature>
<feature type="compositionally biased region" description="Basic and acidic residues" evidence="3">
    <location>
        <begin position="102"/>
        <end position="112"/>
    </location>
</feature>
<reference evidence="4" key="1">
    <citation type="submission" date="2004-08" db="EMBL/GenBank/DDBJ databases">
        <authorList>
            <consortium name="NIH - Xenopus Gene Collection (XGC) project"/>
        </authorList>
    </citation>
    <scope>NUCLEOTIDE SEQUENCE [LARGE SCALE MRNA]</scope>
    <source>
        <tissue evidence="4">Embryo</tissue>
    </source>
</reference>
<keyword id="KW-0539">Nucleus</keyword>
<keyword id="KW-1185">Reference proteome</keyword>
<protein>
    <recommendedName>
        <fullName>Prothymosin alpha-B</fullName>
    </recommendedName>
</protein>
<proteinExistence type="inferred from homology"/>
<gene>
    <name type="primary">ptma-b</name>
</gene>
<sequence>MSDTAVDASVEKSTKDLKAKEKEVVEEAENGKDKPTNGNAENEENGEQEGDNEVDEEEEVDEEDEEDDVEGDDDEVDDDDEVEGATGKRAAEDDEDDDDDVETKKQKTDEDD</sequence>